<name>ARGR_BACAC</name>
<proteinExistence type="inferred from homology"/>
<comment type="function">
    <text evidence="1">Regulates arginine biosynthesis genes.</text>
</comment>
<comment type="pathway">
    <text>Amino-acid biosynthesis; L-arginine biosynthesis [regulation].</text>
</comment>
<comment type="subcellular location">
    <subcellularLocation>
        <location evidence="1">Cytoplasm</location>
    </subcellularLocation>
</comment>
<comment type="similarity">
    <text evidence="1">Belongs to the ArgR family.</text>
</comment>
<reference key="1">
    <citation type="submission" date="2008-10" db="EMBL/GenBank/DDBJ databases">
        <title>Genome sequence of Bacillus anthracis str. CDC 684.</title>
        <authorList>
            <person name="Dodson R.J."/>
            <person name="Munk A.C."/>
            <person name="Brettin T."/>
            <person name="Bruce D."/>
            <person name="Detter C."/>
            <person name="Tapia R."/>
            <person name="Han C."/>
            <person name="Sutton G."/>
            <person name="Sims D."/>
        </authorList>
    </citation>
    <scope>NUCLEOTIDE SEQUENCE [LARGE SCALE GENOMIC DNA]</scope>
    <source>
        <strain>CDC 684 / NRRL 3495</strain>
    </source>
</reference>
<sequence length="149" mass="16928">MNKGQRHIKIREIIANKEIETQDELVDILRNEGFNVTQATVSRDIKELHLVKVPLHDGRYKYSLPADQRFNPLQKLKRNLVDSFVKLDTAGHMLVLKTLPGNAHSLGALIDHLEWDEIIGTICGDDTCLIICRTPEDTGVVSDRFLNML</sequence>
<accession>C3LJU9</accession>
<evidence type="ECO:0000255" key="1">
    <source>
        <dbReference type="HAMAP-Rule" id="MF_00173"/>
    </source>
</evidence>
<gene>
    <name evidence="1" type="primary">argR</name>
    <name type="ordered locus">BAMEG_4434</name>
</gene>
<protein>
    <recommendedName>
        <fullName evidence="1">Arginine repressor</fullName>
    </recommendedName>
</protein>
<keyword id="KW-0028">Amino-acid biosynthesis</keyword>
<keyword id="KW-0055">Arginine biosynthesis</keyword>
<keyword id="KW-0963">Cytoplasm</keyword>
<keyword id="KW-0238">DNA-binding</keyword>
<keyword id="KW-0678">Repressor</keyword>
<keyword id="KW-0804">Transcription</keyword>
<keyword id="KW-0805">Transcription regulation</keyword>
<organism>
    <name type="scientific">Bacillus anthracis (strain CDC 684 / NRRL 3495)</name>
    <dbReference type="NCBI Taxonomy" id="568206"/>
    <lineage>
        <taxon>Bacteria</taxon>
        <taxon>Bacillati</taxon>
        <taxon>Bacillota</taxon>
        <taxon>Bacilli</taxon>
        <taxon>Bacillales</taxon>
        <taxon>Bacillaceae</taxon>
        <taxon>Bacillus</taxon>
        <taxon>Bacillus cereus group</taxon>
    </lineage>
</organism>
<feature type="chain" id="PRO_1000123784" description="Arginine repressor">
    <location>
        <begin position="1"/>
        <end position="149"/>
    </location>
</feature>
<dbReference type="EMBL" id="CP001215">
    <property type="protein sequence ID" value="ACP12306.1"/>
    <property type="molecule type" value="Genomic_DNA"/>
</dbReference>
<dbReference type="RefSeq" id="WP_001032581.1">
    <property type="nucleotide sequence ID" value="NC_012581.1"/>
</dbReference>
<dbReference type="SMR" id="C3LJU9"/>
<dbReference type="GeneID" id="93006927"/>
<dbReference type="KEGG" id="bah:BAMEG_4434"/>
<dbReference type="HOGENOM" id="CLU_097103_3_0_9"/>
<dbReference type="UniPathway" id="UPA00068"/>
<dbReference type="GO" id="GO:0005737">
    <property type="term" value="C:cytoplasm"/>
    <property type="evidence" value="ECO:0007669"/>
    <property type="project" value="UniProtKB-SubCell"/>
</dbReference>
<dbReference type="GO" id="GO:0034618">
    <property type="term" value="F:arginine binding"/>
    <property type="evidence" value="ECO:0007669"/>
    <property type="project" value="InterPro"/>
</dbReference>
<dbReference type="GO" id="GO:0003677">
    <property type="term" value="F:DNA binding"/>
    <property type="evidence" value="ECO:0007669"/>
    <property type="project" value="UniProtKB-KW"/>
</dbReference>
<dbReference type="GO" id="GO:0003700">
    <property type="term" value="F:DNA-binding transcription factor activity"/>
    <property type="evidence" value="ECO:0007669"/>
    <property type="project" value="UniProtKB-UniRule"/>
</dbReference>
<dbReference type="GO" id="GO:0006526">
    <property type="term" value="P:L-arginine biosynthetic process"/>
    <property type="evidence" value="ECO:0007669"/>
    <property type="project" value="UniProtKB-UniPathway"/>
</dbReference>
<dbReference type="GO" id="GO:0051259">
    <property type="term" value="P:protein complex oligomerization"/>
    <property type="evidence" value="ECO:0007669"/>
    <property type="project" value="InterPro"/>
</dbReference>
<dbReference type="GO" id="GO:1900079">
    <property type="term" value="P:regulation of arginine biosynthetic process"/>
    <property type="evidence" value="ECO:0007669"/>
    <property type="project" value="UniProtKB-UniRule"/>
</dbReference>
<dbReference type="FunFam" id="1.10.10.10:FF:000172">
    <property type="entry name" value="Arginine repressor"/>
    <property type="match status" value="1"/>
</dbReference>
<dbReference type="FunFam" id="3.30.1360.40:FF:000006">
    <property type="entry name" value="Arginine repressor"/>
    <property type="match status" value="1"/>
</dbReference>
<dbReference type="Gene3D" id="3.30.1360.40">
    <property type="match status" value="1"/>
</dbReference>
<dbReference type="Gene3D" id="1.10.10.10">
    <property type="entry name" value="Winged helix-like DNA-binding domain superfamily/Winged helix DNA-binding domain"/>
    <property type="match status" value="1"/>
</dbReference>
<dbReference type="HAMAP" id="MF_00173">
    <property type="entry name" value="Arg_repressor"/>
    <property type="match status" value="1"/>
</dbReference>
<dbReference type="InterPro" id="IPR001669">
    <property type="entry name" value="Arg_repress"/>
</dbReference>
<dbReference type="InterPro" id="IPR020899">
    <property type="entry name" value="Arg_repress_C"/>
</dbReference>
<dbReference type="InterPro" id="IPR036251">
    <property type="entry name" value="Arg_repress_C_sf"/>
</dbReference>
<dbReference type="InterPro" id="IPR020900">
    <property type="entry name" value="Arg_repress_DNA-bd"/>
</dbReference>
<dbReference type="InterPro" id="IPR036388">
    <property type="entry name" value="WH-like_DNA-bd_sf"/>
</dbReference>
<dbReference type="InterPro" id="IPR036390">
    <property type="entry name" value="WH_DNA-bd_sf"/>
</dbReference>
<dbReference type="NCBIfam" id="TIGR01529">
    <property type="entry name" value="argR_whole"/>
    <property type="match status" value="1"/>
</dbReference>
<dbReference type="NCBIfam" id="NF003281">
    <property type="entry name" value="PRK04280.1"/>
    <property type="match status" value="1"/>
</dbReference>
<dbReference type="PANTHER" id="PTHR34471">
    <property type="entry name" value="ARGININE REPRESSOR"/>
    <property type="match status" value="1"/>
</dbReference>
<dbReference type="PANTHER" id="PTHR34471:SF1">
    <property type="entry name" value="ARGININE REPRESSOR"/>
    <property type="match status" value="1"/>
</dbReference>
<dbReference type="Pfam" id="PF01316">
    <property type="entry name" value="Arg_repressor"/>
    <property type="match status" value="1"/>
</dbReference>
<dbReference type="Pfam" id="PF02863">
    <property type="entry name" value="Arg_repressor_C"/>
    <property type="match status" value="1"/>
</dbReference>
<dbReference type="PRINTS" id="PR01467">
    <property type="entry name" value="ARGREPRESSOR"/>
</dbReference>
<dbReference type="SUPFAM" id="SSF55252">
    <property type="entry name" value="C-terminal domain of arginine repressor"/>
    <property type="match status" value="1"/>
</dbReference>
<dbReference type="SUPFAM" id="SSF46785">
    <property type="entry name" value="Winged helix' DNA-binding domain"/>
    <property type="match status" value="1"/>
</dbReference>